<organism>
    <name type="scientific">Mycobacterium tuberculosis (strain CDC 1551 / Oshkosh)</name>
    <dbReference type="NCBI Taxonomy" id="83331"/>
    <lineage>
        <taxon>Bacteria</taxon>
        <taxon>Bacillati</taxon>
        <taxon>Actinomycetota</taxon>
        <taxon>Actinomycetes</taxon>
        <taxon>Mycobacteriales</taxon>
        <taxon>Mycobacteriaceae</taxon>
        <taxon>Mycobacterium</taxon>
        <taxon>Mycobacterium tuberculosis complex</taxon>
    </lineage>
</organism>
<protein>
    <recommendedName>
        <fullName>Probable arabinosyltransferase A</fullName>
        <ecNumber>2.4.2.-</ecNumber>
    </recommendedName>
</protein>
<reference key="1">
    <citation type="journal article" date="2002" name="J. Bacteriol.">
        <title>Whole-genome comparison of Mycobacterium tuberculosis clinical and laboratory strains.</title>
        <authorList>
            <person name="Fleischmann R.D."/>
            <person name="Alland D."/>
            <person name="Eisen J.A."/>
            <person name="Carpenter L."/>
            <person name="White O."/>
            <person name="Peterson J.D."/>
            <person name="DeBoy R.T."/>
            <person name="Dodson R.J."/>
            <person name="Gwinn M.L."/>
            <person name="Haft D.H."/>
            <person name="Hickey E.K."/>
            <person name="Kolonay J.F."/>
            <person name="Nelson W.C."/>
            <person name="Umayam L.A."/>
            <person name="Ermolaeva M.D."/>
            <person name="Salzberg S.L."/>
            <person name="Delcher A."/>
            <person name="Utterback T.R."/>
            <person name="Weidman J.F."/>
            <person name="Khouri H.M."/>
            <person name="Gill J."/>
            <person name="Mikula A."/>
            <person name="Bishai W."/>
            <person name="Jacobs W.R. Jr."/>
            <person name="Venter J.C."/>
            <person name="Fraser C.M."/>
        </authorList>
    </citation>
    <scope>NUCLEOTIDE SEQUENCE [LARGE SCALE GENOMIC DNA]</scope>
    <source>
        <strain>CDC 1551 / Oshkosh</strain>
    </source>
</reference>
<dbReference type="EC" id="2.4.2.-"/>
<dbReference type="EMBL" id="AE000516">
    <property type="protein sequence ID" value="AAK48267.1"/>
    <property type="molecule type" value="Genomic_DNA"/>
</dbReference>
<dbReference type="PIR" id="F70697">
    <property type="entry name" value="F70697"/>
</dbReference>
<dbReference type="RefSeq" id="WP_003899696.1">
    <property type="nucleotide sequence ID" value="NZ_KK341227.1"/>
</dbReference>
<dbReference type="SMR" id="P9WNL8"/>
<dbReference type="DrugCentral" id="P9WNL8"/>
<dbReference type="CAZy" id="GT53">
    <property type="family name" value="Glycosyltransferase Family 53"/>
</dbReference>
<dbReference type="KEGG" id="mtc:MT3901"/>
<dbReference type="PATRIC" id="fig|83331.31.peg.4198"/>
<dbReference type="HOGENOM" id="CLU_010182_0_0_11"/>
<dbReference type="Proteomes" id="UP000001020">
    <property type="component" value="Chromosome"/>
</dbReference>
<dbReference type="GO" id="GO:0005886">
    <property type="term" value="C:plasma membrane"/>
    <property type="evidence" value="ECO:0007669"/>
    <property type="project" value="UniProtKB-SubCell"/>
</dbReference>
<dbReference type="GO" id="GO:0052636">
    <property type="term" value="F:arabinosyltransferase activity"/>
    <property type="evidence" value="ECO:0007669"/>
    <property type="project" value="InterPro"/>
</dbReference>
<dbReference type="GO" id="GO:0071766">
    <property type="term" value="P:Actinobacterium-type cell wall biogenesis"/>
    <property type="evidence" value="ECO:0007669"/>
    <property type="project" value="InterPro"/>
</dbReference>
<dbReference type="GO" id="GO:0071555">
    <property type="term" value="P:cell wall organization"/>
    <property type="evidence" value="ECO:0007669"/>
    <property type="project" value="UniProtKB-KW"/>
</dbReference>
<dbReference type="GO" id="GO:0046677">
    <property type="term" value="P:response to antibiotic"/>
    <property type="evidence" value="ECO:0007669"/>
    <property type="project" value="UniProtKB-KW"/>
</dbReference>
<dbReference type="FunFam" id="3.40.190.160:FF:000002">
    <property type="entry name" value="Integral membrane indolylacetylinositol arabinosyltransferase embA"/>
    <property type="match status" value="1"/>
</dbReference>
<dbReference type="FunFam" id="2.60.120.940:FF:000001">
    <property type="entry name" value="Membrane indolylacetylinositol arabinosyltransferase embC"/>
    <property type="match status" value="1"/>
</dbReference>
<dbReference type="Gene3D" id="3.40.190.160">
    <property type="match status" value="1"/>
</dbReference>
<dbReference type="Gene3D" id="2.60.120.610">
    <property type="entry name" value="arabinofuranosyltransferase like domain"/>
    <property type="match status" value="1"/>
</dbReference>
<dbReference type="Gene3D" id="2.60.120.940">
    <property type="entry name" value="EmbC, C-terminal domain, subdomain 2"/>
    <property type="match status" value="1"/>
</dbReference>
<dbReference type="InterPro" id="IPR032731">
    <property type="entry name" value="Arabino_trans_C"/>
</dbReference>
<dbReference type="InterPro" id="IPR042486">
    <property type="entry name" value="Arabino_trans_C_2"/>
</dbReference>
<dbReference type="InterPro" id="IPR007680">
    <property type="entry name" value="Arabino_trans_central"/>
</dbReference>
<dbReference type="InterPro" id="IPR040920">
    <property type="entry name" value="Arabino_trans_N"/>
</dbReference>
<dbReference type="InterPro" id="IPR027451">
    <property type="entry name" value="EmbABC_dom1"/>
</dbReference>
<dbReference type="Pfam" id="PF14896">
    <property type="entry name" value="Arabino_trans_C"/>
    <property type="match status" value="1"/>
</dbReference>
<dbReference type="Pfam" id="PF17689">
    <property type="entry name" value="Arabino_trans_N"/>
    <property type="match status" value="1"/>
</dbReference>
<dbReference type="Pfam" id="PF04602">
    <property type="entry name" value="Arabinose_trans"/>
    <property type="match status" value="1"/>
</dbReference>
<gene>
    <name type="primary">embA</name>
    <name type="ordered locus">MT3901</name>
</gene>
<proteinExistence type="inferred from homology"/>
<sequence length="1094" mass="115724">MPHDGNERSHRIARLAAVVSGIAGLLLCGIVPLLPVNQTTATIFWPQGSTADGNITQITAPLVSGAPRALDISIPCSAIATLPANGGLVLSTLPAGGVDTGKAGLFVRANQDTVVVAFRDSVAAVAARSTIAAGGCSALHIWADTGGAGADFMGIPGGAGTLPPEKKPQVGGIFTDLKVGAQPGLSARVDIDTRFITTPGALKKAVMLLGVLAVLVAMVGLAALDRLSRGRTLRDWLTRYRPRVRVGFASRLADAAVIATLLLWHVIGATSSDDGYLLTVARVAPKAGYVANYYRYFGTTEAPFDWYTSVLAQLAAVSTAGVWMRLPATLAGIACWLIVSRFVLRRLGPGPGGLASNRVAVFTAGAVFLSAWLPFNNGLRPEPLIALGVLVTWVLVERSIALGRLAPAAVAIIVATLTATLAPQGLIALAPLLTGARAIAQRIRRRRATDGLLAPLAVLAAALSLITVVVFRDQTLATVAESARIKYKVGPTIAWYQDFLRYYFLTVESNVEGSMSRRFAVLVLLFCLFGVLFVLLRRGRVAGLASGPAWRLIGTTAVGLLLLTFTPTKWAVQFGAFAGLAGVLGAVTAFTFARIGLHSRRNLTLYVTALLFVLAWATSGINGWFYVGNYGVPWYDIQPVIASHPVTSMFLTLSILTGLLAAWYHFRMDYAGHTEVKDNRRNRILASTPLLVVAVIMVAGEVGSMAKAAVFRYPLYTTAKANLTALSTGLSSCAMADDVLAEPDPNAGMLQPVPGQAFGPDGPLGGISPVGFKPEGVGEDLKSDPVVSKPGLVNSDASPNKPNAAITDSAGTAGGKGPVGINGSHAALPFGLDPARTPVMGSYGENNLAATATSAWYQLPPRSPDRPLVVVSAAGAIWSYKEDGDFIYGQSLKLQWGVTGPDGRIQPLGQVFPIDIGPQPAWRNLRFPLAWAPPEADVARIVAYDPNLSPEQWFAFTPPRVPVLESLQRLIGSATPVLMDIATAANFPCQRPFSEHLGIAELPQYRILPDHKQTAASSNLWQSSSTGGPFLFTQALLRTSTIATYLRGDWYRDWGSVEQYHRLVPADQAPDAVVEEGVITVPGWGRPGPIRALP</sequence>
<keyword id="KW-0046">Antibiotic resistance</keyword>
<keyword id="KW-1003">Cell membrane</keyword>
<keyword id="KW-0961">Cell wall biogenesis/degradation</keyword>
<keyword id="KW-0328">Glycosyltransferase</keyword>
<keyword id="KW-0472">Membrane</keyword>
<keyword id="KW-1185">Reference proteome</keyword>
<keyword id="KW-0808">Transferase</keyword>
<keyword id="KW-0812">Transmembrane</keyword>
<keyword id="KW-1133">Transmembrane helix</keyword>
<feature type="chain" id="PRO_0000427104" description="Probable arabinosyltransferase A">
    <location>
        <begin position="1"/>
        <end position="1094"/>
    </location>
</feature>
<feature type="transmembrane region" description="Helical" evidence="2">
    <location>
        <begin position="12"/>
        <end position="34"/>
    </location>
</feature>
<feature type="transmembrane region" description="Helical" evidence="2">
    <location>
        <begin position="205"/>
        <end position="224"/>
    </location>
</feature>
<feature type="transmembrane region" description="Helical" evidence="2">
    <location>
        <begin position="247"/>
        <end position="269"/>
    </location>
</feature>
<feature type="transmembrane region" description="Helical" evidence="2">
    <location>
        <begin position="322"/>
        <end position="344"/>
    </location>
</feature>
<feature type="transmembrane region" description="Helical" evidence="2">
    <location>
        <begin position="356"/>
        <end position="375"/>
    </location>
</feature>
<feature type="transmembrane region" description="Helical" evidence="2">
    <location>
        <begin position="408"/>
        <end position="430"/>
    </location>
</feature>
<feature type="transmembrane region" description="Helical" evidence="2">
    <location>
        <begin position="451"/>
        <end position="470"/>
    </location>
</feature>
<feature type="transmembrane region" description="Helical" evidence="2">
    <location>
        <begin position="519"/>
        <end position="536"/>
    </location>
</feature>
<feature type="transmembrane region" description="Helical" evidence="2">
    <location>
        <begin position="543"/>
        <end position="565"/>
    </location>
</feature>
<feature type="transmembrane region" description="Helical" evidence="2">
    <location>
        <begin position="575"/>
        <end position="597"/>
    </location>
</feature>
<feature type="transmembrane region" description="Helical" evidence="2">
    <location>
        <begin position="604"/>
        <end position="626"/>
    </location>
</feature>
<feature type="transmembrane region" description="Helical" evidence="2">
    <location>
        <begin position="641"/>
        <end position="663"/>
    </location>
</feature>
<feature type="transmembrane region" description="Helical" evidence="2">
    <location>
        <begin position="684"/>
        <end position="706"/>
    </location>
</feature>
<name>EMBA_MYCTO</name>
<comment type="function">
    <text evidence="1">Arabinosyl transferase responsible for the polymerization of arabinose into the arabinan of arabinogalactan.</text>
</comment>
<comment type="subcellular location">
    <subcellularLocation>
        <location evidence="1">Cell membrane</location>
        <topology evidence="1">Multi-pass membrane protein</topology>
    </subcellularLocation>
</comment>
<comment type="similarity">
    <text evidence="3">Belongs to the emb family.</text>
</comment>
<evidence type="ECO:0000250" key="1"/>
<evidence type="ECO:0000255" key="2"/>
<evidence type="ECO:0000305" key="3"/>
<accession>P9WNL8</accession>
<accession>L0TDK4</accession>
<accession>P0A560</accession>
<accession>P72029</accession>
<accession>P72060</accession>